<protein>
    <recommendedName>
        <fullName>Flagellar biosynthetic protein FlhB</fullName>
    </recommendedName>
</protein>
<accession>Q8K9S1</accession>
<evidence type="ECO:0000250" key="1"/>
<evidence type="ECO:0000255" key="2"/>
<evidence type="ECO:0000256" key="3">
    <source>
        <dbReference type="SAM" id="MobiDB-lite"/>
    </source>
</evidence>
<evidence type="ECO:0000305" key="4"/>
<dbReference type="EMBL" id="AE013218">
    <property type="protein sequence ID" value="AAM67794.1"/>
    <property type="molecule type" value="Genomic_DNA"/>
</dbReference>
<dbReference type="RefSeq" id="WP_011053761.1">
    <property type="nucleotide sequence ID" value="NC_004061.1"/>
</dbReference>
<dbReference type="SMR" id="Q8K9S1"/>
<dbReference type="STRING" id="198804.BUsg_235"/>
<dbReference type="MEROPS" id="N06.A01"/>
<dbReference type="GeneID" id="93003701"/>
<dbReference type="KEGG" id="bas:BUsg_235"/>
<dbReference type="eggNOG" id="COG1377">
    <property type="taxonomic scope" value="Bacteria"/>
</dbReference>
<dbReference type="HOGENOM" id="CLU_041013_1_2_6"/>
<dbReference type="Proteomes" id="UP000000416">
    <property type="component" value="Chromosome"/>
</dbReference>
<dbReference type="GO" id="GO:0005886">
    <property type="term" value="C:plasma membrane"/>
    <property type="evidence" value="ECO:0007669"/>
    <property type="project" value="UniProtKB-SubCell"/>
</dbReference>
<dbReference type="GO" id="GO:0044780">
    <property type="term" value="P:bacterial-type flagellum assembly"/>
    <property type="evidence" value="ECO:0007669"/>
    <property type="project" value="InterPro"/>
</dbReference>
<dbReference type="GO" id="GO:0009306">
    <property type="term" value="P:protein secretion"/>
    <property type="evidence" value="ECO:0007669"/>
    <property type="project" value="InterPro"/>
</dbReference>
<dbReference type="FunFam" id="3.40.1690.10:FF:000001">
    <property type="entry name" value="Flagellar biosynthetic protein FlhB"/>
    <property type="match status" value="1"/>
</dbReference>
<dbReference type="Gene3D" id="6.10.250.2080">
    <property type="match status" value="1"/>
</dbReference>
<dbReference type="Gene3D" id="3.40.1690.10">
    <property type="entry name" value="secretion proteins EscU"/>
    <property type="match status" value="1"/>
</dbReference>
<dbReference type="InterPro" id="IPR006136">
    <property type="entry name" value="FlhB"/>
</dbReference>
<dbReference type="InterPro" id="IPR006135">
    <property type="entry name" value="T3SS_substrate_exporter"/>
</dbReference>
<dbReference type="InterPro" id="IPR029025">
    <property type="entry name" value="T3SS_substrate_exporter_C"/>
</dbReference>
<dbReference type="NCBIfam" id="TIGR00328">
    <property type="entry name" value="flhB"/>
    <property type="match status" value="1"/>
</dbReference>
<dbReference type="PANTHER" id="PTHR30531">
    <property type="entry name" value="FLAGELLAR BIOSYNTHETIC PROTEIN FLHB"/>
    <property type="match status" value="1"/>
</dbReference>
<dbReference type="PANTHER" id="PTHR30531:SF12">
    <property type="entry name" value="FLAGELLAR BIOSYNTHETIC PROTEIN FLHB"/>
    <property type="match status" value="1"/>
</dbReference>
<dbReference type="Pfam" id="PF01312">
    <property type="entry name" value="Bac_export_2"/>
    <property type="match status" value="1"/>
</dbReference>
<dbReference type="PRINTS" id="PR00950">
    <property type="entry name" value="TYPE3IMSPROT"/>
</dbReference>
<dbReference type="SUPFAM" id="SSF160544">
    <property type="entry name" value="EscU C-terminal domain-like"/>
    <property type="match status" value="1"/>
</dbReference>
<keyword id="KW-1005">Bacterial flagellum biogenesis</keyword>
<keyword id="KW-1006">Bacterial flagellum protein export</keyword>
<keyword id="KW-1003">Cell membrane</keyword>
<keyword id="KW-0472">Membrane</keyword>
<keyword id="KW-0653">Protein transport</keyword>
<keyword id="KW-0812">Transmembrane</keyword>
<keyword id="KW-1133">Transmembrane helix</keyword>
<keyword id="KW-0813">Transport</keyword>
<sequence length="381" mass="44682">MNHDINEEKTEQPTEHHIKKFRKKGETRYSRELNSLLILIFGLSNLWWSRYSIIFELKTIMFNSFNFNQNILTNQQNISLNFFFFIKKILIVFFPFFSFLICIIIIPPILFGGIKFNFTSLKLNFARLNLLHGLKKFFSFQIFIELFKTTLKLFIISCISIFYLWIYFYKILFLSTKNISSSLLDGFNVIFYCCILIILGLIPIVILDVFWRQWSYYKKLKMTHQEIKDEFKEREGSPQIKARIRQQMKINLRRRMISDVPKADVIITNPIHYAIALKYDIHKMNAPKVIAKGIGATAMKIQKIALKNGIAIIASPSLARALYRYSEIGQYIPGPLYKAVAEILAWVWKVKKWKREGGIFPEKPKNISVPSELNVTGESND</sequence>
<gene>
    <name type="primary">flhB</name>
    <name type="ordered locus">BUsg_235</name>
</gene>
<name>FLHB_BUCAP</name>
<comment type="function">
    <text evidence="1">Required for formation of the rod structure in the basal body of the flagellar apparatus. Together with FliI and FliH, may constitute the export apparatus of flagellin (By similarity).</text>
</comment>
<comment type="subcellular location">
    <subcellularLocation>
        <location evidence="4">Cell membrane</location>
        <topology evidence="4">Multi-pass membrane protein</topology>
    </subcellularLocation>
</comment>
<comment type="similarity">
    <text evidence="4">Belongs to the type III secretion exporter family.</text>
</comment>
<reference key="1">
    <citation type="journal article" date="2002" name="Science">
        <title>50 million years of genomic stasis in endosymbiotic bacteria.</title>
        <authorList>
            <person name="Tamas I."/>
            <person name="Klasson L."/>
            <person name="Canbaeck B."/>
            <person name="Naeslund A.K."/>
            <person name="Eriksson A.-S."/>
            <person name="Wernegreen J.J."/>
            <person name="Sandstroem J.P."/>
            <person name="Moran N.A."/>
            <person name="Andersson S.G.E."/>
        </authorList>
    </citation>
    <scope>NUCLEOTIDE SEQUENCE [LARGE SCALE GENOMIC DNA]</scope>
    <source>
        <strain>Sg</strain>
    </source>
</reference>
<feature type="chain" id="PRO_0000180947" description="Flagellar biosynthetic protein FlhB">
    <location>
        <begin position="1"/>
        <end position="381"/>
    </location>
</feature>
<feature type="transmembrane region" description="Helical" evidence="2">
    <location>
        <begin position="35"/>
        <end position="55"/>
    </location>
</feature>
<feature type="transmembrane region" description="Helical" evidence="2">
    <location>
        <begin position="89"/>
        <end position="109"/>
    </location>
</feature>
<feature type="transmembrane region" description="Helical" evidence="2">
    <location>
        <begin position="153"/>
        <end position="173"/>
    </location>
</feature>
<feature type="transmembrane region" description="Helical" evidence="2">
    <location>
        <begin position="187"/>
        <end position="207"/>
    </location>
</feature>
<feature type="region of interest" description="Disordered" evidence="3">
    <location>
        <begin position="1"/>
        <end position="21"/>
    </location>
</feature>
<feature type="compositionally biased region" description="Basic and acidic residues" evidence="3">
    <location>
        <begin position="1"/>
        <end position="16"/>
    </location>
</feature>
<organism>
    <name type="scientific">Buchnera aphidicola subsp. Schizaphis graminum (strain Sg)</name>
    <dbReference type="NCBI Taxonomy" id="198804"/>
    <lineage>
        <taxon>Bacteria</taxon>
        <taxon>Pseudomonadati</taxon>
        <taxon>Pseudomonadota</taxon>
        <taxon>Gammaproteobacteria</taxon>
        <taxon>Enterobacterales</taxon>
        <taxon>Erwiniaceae</taxon>
        <taxon>Buchnera</taxon>
    </lineage>
</organism>
<proteinExistence type="inferred from homology"/>